<proteinExistence type="inferred from homology"/>
<protein>
    <recommendedName>
        <fullName evidence="1">3-ketoacyl-CoA thiolase</fullName>
        <ecNumber evidence="1">2.3.1.16</ecNumber>
    </recommendedName>
    <alternativeName>
        <fullName evidence="1">Acetyl-CoA acyltransferase</fullName>
    </alternativeName>
    <alternativeName>
        <fullName evidence="1">Beta-ketothiolase</fullName>
    </alternativeName>
    <alternativeName>
        <fullName evidence="1">Fatty acid oxidation complex subunit beta</fullName>
    </alternativeName>
</protein>
<gene>
    <name evidence="1" type="primary">fadA</name>
    <name type="ordered locus">Sputw3181_0012</name>
</gene>
<reference key="1">
    <citation type="submission" date="2006-12" db="EMBL/GenBank/DDBJ databases">
        <title>Complete sequence of Shewanella sp. W3-18-1.</title>
        <authorList>
            <consortium name="US DOE Joint Genome Institute"/>
            <person name="Copeland A."/>
            <person name="Lucas S."/>
            <person name="Lapidus A."/>
            <person name="Barry K."/>
            <person name="Detter J.C."/>
            <person name="Glavina del Rio T."/>
            <person name="Hammon N."/>
            <person name="Israni S."/>
            <person name="Dalin E."/>
            <person name="Tice H."/>
            <person name="Pitluck S."/>
            <person name="Chain P."/>
            <person name="Malfatti S."/>
            <person name="Shin M."/>
            <person name="Vergez L."/>
            <person name="Schmutz J."/>
            <person name="Larimer F."/>
            <person name="Land M."/>
            <person name="Hauser L."/>
            <person name="Kyrpides N."/>
            <person name="Lykidis A."/>
            <person name="Tiedje J."/>
            <person name="Richardson P."/>
        </authorList>
    </citation>
    <scope>NUCLEOTIDE SEQUENCE [LARGE SCALE GENOMIC DNA]</scope>
    <source>
        <strain>W3-18-1</strain>
    </source>
</reference>
<sequence>MKQAVIVDCIRTPMGRSKAGVFRNVRAETLSAELMKGLLLRNPQLDPNLIEDVIWGCVQQTLEQGFNIARNASLLAGIPKTAGAVTVNRLCGSSMDAIHQAARAIMTGMGDTFIIGGVEHMGHVPMSHGVDFHPGLANNVAKASGMMGLTAEMLGKLHGITREQQDAFAVRSHQRAYAATIEGRFAKEIYGIEGHDANGALIKVLQDEVIRPETTMESLAALRPVFDPVNGTVTAGTSSALSDGASAMLIMEESKARALSLPIRARIRSMAVAGCDAAIMGYGPVPATQKALARAGITVADLDVIELNEAFAAQSLPCVKDLGLADVVDDKINLNGGAIALGHPLGCSGARISTTLINLMEDKDATLGLATMCIGLGQGIATVFERV</sequence>
<feature type="chain" id="PRO_0000292907" description="3-ketoacyl-CoA thiolase">
    <location>
        <begin position="1"/>
        <end position="387"/>
    </location>
</feature>
<feature type="active site" description="Acyl-thioester intermediate" evidence="1">
    <location>
        <position position="91"/>
    </location>
</feature>
<feature type="active site" description="Proton acceptor" evidence="1">
    <location>
        <position position="343"/>
    </location>
</feature>
<feature type="active site" description="Proton acceptor" evidence="1">
    <location>
        <position position="373"/>
    </location>
</feature>
<dbReference type="EC" id="2.3.1.16" evidence="1"/>
<dbReference type="EMBL" id="CP000503">
    <property type="protein sequence ID" value="ABM22865.1"/>
    <property type="molecule type" value="Genomic_DNA"/>
</dbReference>
<dbReference type="RefSeq" id="WP_011787434.1">
    <property type="nucleotide sequence ID" value="NC_008750.1"/>
</dbReference>
<dbReference type="SMR" id="A1RDW3"/>
<dbReference type="KEGG" id="shw:Sputw3181_0012"/>
<dbReference type="HOGENOM" id="CLU_031026_2_3_6"/>
<dbReference type="UniPathway" id="UPA00659"/>
<dbReference type="Proteomes" id="UP000002597">
    <property type="component" value="Chromosome"/>
</dbReference>
<dbReference type="GO" id="GO:0005737">
    <property type="term" value="C:cytoplasm"/>
    <property type="evidence" value="ECO:0007669"/>
    <property type="project" value="UniProtKB-SubCell"/>
</dbReference>
<dbReference type="GO" id="GO:0003988">
    <property type="term" value="F:acetyl-CoA C-acyltransferase activity"/>
    <property type="evidence" value="ECO:0007669"/>
    <property type="project" value="UniProtKB-UniRule"/>
</dbReference>
<dbReference type="GO" id="GO:0006635">
    <property type="term" value="P:fatty acid beta-oxidation"/>
    <property type="evidence" value="ECO:0007669"/>
    <property type="project" value="UniProtKB-UniRule"/>
</dbReference>
<dbReference type="GO" id="GO:0010124">
    <property type="term" value="P:phenylacetate catabolic process"/>
    <property type="evidence" value="ECO:0007669"/>
    <property type="project" value="TreeGrafter"/>
</dbReference>
<dbReference type="CDD" id="cd00751">
    <property type="entry name" value="thiolase"/>
    <property type="match status" value="1"/>
</dbReference>
<dbReference type="FunFam" id="3.40.47.10:FF:000010">
    <property type="entry name" value="Acetyl-CoA acetyltransferase (Thiolase)"/>
    <property type="match status" value="1"/>
</dbReference>
<dbReference type="Gene3D" id="3.40.47.10">
    <property type="match status" value="2"/>
</dbReference>
<dbReference type="HAMAP" id="MF_01620">
    <property type="entry name" value="FadA"/>
    <property type="match status" value="1"/>
</dbReference>
<dbReference type="InterPro" id="IPR012805">
    <property type="entry name" value="FadA"/>
</dbReference>
<dbReference type="InterPro" id="IPR002155">
    <property type="entry name" value="Thiolase"/>
</dbReference>
<dbReference type="InterPro" id="IPR016039">
    <property type="entry name" value="Thiolase-like"/>
</dbReference>
<dbReference type="InterPro" id="IPR050215">
    <property type="entry name" value="Thiolase-like_sf_Thiolase"/>
</dbReference>
<dbReference type="InterPro" id="IPR020615">
    <property type="entry name" value="Thiolase_acyl_enz_int_AS"/>
</dbReference>
<dbReference type="InterPro" id="IPR020610">
    <property type="entry name" value="Thiolase_AS"/>
</dbReference>
<dbReference type="InterPro" id="IPR020617">
    <property type="entry name" value="Thiolase_C"/>
</dbReference>
<dbReference type="InterPro" id="IPR020613">
    <property type="entry name" value="Thiolase_CS"/>
</dbReference>
<dbReference type="InterPro" id="IPR020616">
    <property type="entry name" value="Thiolase_N"/>
</dbReference>
<dbReference type="NCBIfam" id="TIGR01930">
    <property type="entry name" value="AcCoA-C-Actrans"/>
    <property type="match status" value="1"/>
</dbReference>
<dbReference type="NCBIfam" id="TIGR02445">
    <property type="entry name" value="fadA"/>
    <property type="match status" value="1"/>
</dbReference>
<dbReference type="NCBIfam" id="NF006510">
    <property type="entry name" value="PRK08947.1"/>
    <property type="match status" value="1"/>
</dbReference>
<dbReference type="PANTHER" id="PTHR43853:SF11">
    <property type="entry name" value="3-KETOACYL-COA THIOLASE FADA"/>
    <property type="match status" value="1"/>
</dbReference>
<dbReference type="PANTHER" id="PTHR43853">
    <property type="entry name" value="3-KETOACYL-COA THIOLASE, PEROXISOMAL"/>
    <property type="match status" value="1"/>
</dbReference>
<dbReference type="Pfam" id="PF02803">
    <property type="entry name" value="Thiolase_C"/>
    <property type="match status" value="1"/>
</dbReference>
<dbReference type="Pfam" id="PF00108">
    <property type="entry name" value="Thiolase_N"/>
    <property type="match status" value="1"/>
</dbReference>
<dbReference type="PIRSF" id="PIRSF000429">
    <property type="entry name" value="Ac-CoA_Ac_transf"/>
    <property type="match status" value="1"/>
</dbReference>
<dbReference type="SUPFAM" id="SSF53901">
    <property type="entry name" value="Thiolase-like"/>
    <property type="match status" value="2"/>
</dbReference>
<dbReference type="PROSITE" id="PS00098">
    <property type="entry name" value="THIOLASE_1"/>
    <property type="match status" value="1"/>
</dbReference>
<dbReference type="PROSITE" id="PS00737">
    <property type="entry name" value="THIOLASE_2"/>
    <property type="match status" value="1"/>
</dbReference>
<dbReference type="PROSITE" id="PS00099">
    <property type="entry name" value="THIOLASE_3"/>
    <property type="match status" value="1"/>
</dbReference>
<evidence type="ECO:0000255" key="1">
    <source>
        <dbReference type="HAMAP-Rule" id="MF_01620"/>
    </source>
</evidence>
<keyword id="KW-0012">Acyltransferase</keyword>
<keyword id="KW-0963">Cytoplasm</keyword>
<keyword id="KW-0276">Fatty acid metabolism</keyword>
<keyword id="KW-0442">Lipid degradation</keyword>
<keyword id="KW-0443">Lipid metabolism</keyword>
<keyword id="KW-0808">Transferase</keyword>
<comment type="function">
    <text evidence="1">Catalyzes the final step of fatty acid oxidation in which acetyl-CoA is released and the CoA ester of a fatty acid two carbons shorter is formed.</text>
</comment>
<comment type="catalytic activity">
    <reaction evidence="1">
        <text>an acyl-CoA + acetyl-CoA = a 3-oxoacyl-CoA + CoA</text>
        <dbReference type="Rhea" id="RHEA:21564"/>
        <dbReference type="ChEBI" id="CHEBI:57287"/>
        <dbReference type="ChEBI" id="CHEBI:57288"/>
        <dbReference type="ChEBI" id="CHEBI:58342"/>
        <dbReference type="ChEBI" id="CHEBI:90726"/>
        <dbReference type="EC" id="2.3.1.16"/>
    </reaction>
</comment>
<comment type="pathway">
    <text evidence="1">Lipid metabolism; fatty acid beta-oxidation.</text>
</comment>
<comment type="subunit">
    <text evidence="1">Heterotetramer of two alpha chains (FadB) and two beta chains (FadA).</text>
</comment>
<comment type="subcellular location">
    <subcellularLocation>
        <location evidence="1">Cytoplasm</location>
    </subcellularLocation>
</comment>
<comment type="similarity">
    <text evidence="1">Belongs to the thiolase-like superfamily. Thiolase family.</text>
</comment>
<name>FADA_SHESW</name>
<accession>A1RDW3</accession>
<organism>
    <name type="scientific">Shewanella sp. (strain W3-18-1)</name>
    <dbReference type="NCBI Taxonomy" id="351745"/>
    <lineage>
        <taxon>Bacteria</taxon>
        <taxon>Pseudomonadati</taxon>
        <taxon>Pseudomonadota</taxon>
        <taxon>Gammaproteobacteria</taxon>
        <taxon>Alteromonadales</taxon>
        <taxon>Shewanellaceae</taxon>
        <taxon>Shewanella</taxon>
    </lineage>
</organism>